<organism>
    <name type="scientific">Danio rerio</name>
    <name type="common">Zebrafish</name>
    <name type="synonym">Brachydanio rerio</name>
    <dbReference type="NCBI Taxonomy" id="7955"/>
    <lineage>
        <taxon>Eukaryota</taxon>
        <taxon>Metazoa</taxon>
        <taxon>Chordata</taxon>
        <taxon>Craniata</taxon>
        <taxon>Vertebrata</taxon>
        <taxon>Euteleostomi</taxon>
        <taxon>Actinopterygii</taxon>
        <taxon>Neopterygii</taxon>
        <taxon>Teleostei</taxon>
        <taxon>Ostariophysi</taxon>
        <taxon>Cypriniformes</taxon>
        <taxon>Danionidae</taxon>
        <taxon>Danioninae</taxon>
        <taxon>Danio</taxon>
    </lineage>
</organism>
<name>SOX1A_DANRE</name>
<proteinExistence type="evidence at transcript level"/>
<protein>
    <recommendedName>
        <fullName>Transcription factor Sox-1a</fullName>
    </recommendedName>
</protein>
<sequence length="336" mass="36223">MYSMMMETDLHSPGPQTNTNPGQTGPNSGSKANQDRVKRPMNAFMVWSRGQRRKMAQENPKMHNSEISKRLGAEWKVMSEAEKRPFIDEAKRLRAMHMKEHPDYKYRPRRKTKTLLKKDKYSLAGGLLGGAGGGVGMSPAGVGQRLESPGGHGGSASAGYAHMNGWANGTYSGQVAAAAAAAAMMQEAQLAYSQHPGSGSHHHHAHHHHPHNPQPMHRYDMTALQYSPISNSQSYMSASPSGYGGISYTQHQNSSVATSAAIGTLSSLVKSEPNISPPVTTHSRGPCPGDLREMISMYLPTGESGDPSVQSRLHALPQHYQSTTAGVNGTVPLTHI</sequence>
<keyword id="KW-0010">Activator</keyword>
<keyword id="KW-0217">Developmental protein</keyword>
<keyword id="KW-0238">DNA-binding</keyword>
<keyword id="KW-0539">Nucleus</keyword>
<keyword id="KW-1185">Reference proteome</keyword>
<keyword id="KW-0804">Transcription</keyword>
<keyword id="KW-0805">Transcription regulation</keyword>
<reference evidence="5 8" key="1">
    <citation type="journal article" date="2006" name="Dev. Dyn.">
        <title>Comparative genomic and expression analysis of group B1 sox genes in zebrafish indicates their diversification during vertebrate evolution.</title>
        <authorList>
            <person name="Okuda Y."/>
            <person name="Yoda H."/>
            <person name="Uchikawa M."/>
            <person name="Furutani-Seiki M."/>
            <person name="Takeda H."/>
            <person name="Kondoh H."/>
            <person name="Kamachi Y."/>
        </authorList>
    </citation>
    <scope>NUCLEOTIDE SEQUENCE [MRNA]</scope>
    <scope>FUNCTION</scope>
    <scope>TISSUE SPECIFICITY</scope>
    <scope>DEVELOPMENTAL STAGE</scope>
    <source>
        <tissue evidence="4">Embryo</tissue>
    </source>
</reference>
<reference key="2">
    <citation type="journal article" date="2013" name="Nature">
        <title>The zebrafish reference genome sequence and its relationship to the human genome.</title>
        <authorList>
            <person name="Howe K."/>
            <person name="Clark M.D."/>
            <person name="Torroja C.F."/>
            <person name="Torrance J."/>
            <person name="Berthelot C."/>
            <person name="Muffato M."/>
            <person name="Collins J.E."/>
            <person name="Humphray S."/>
            <person name="McLaren K."/>
            <person name="Matthews L."/>
            <person name="McLaren S."/>
            <person name="Sealy I."/>
            <person name="Caccamo M."/>
            <person name="Churcher C."/>
            <person name="Scott C."/>
            <person name="Barrett J.C."/>
            <person name="Koch R."/>
            <person name="Rauch G.J."/>
            <person name="White S."/>
            <person name="Chow W."/>
            <person name="Kilian B."/>
            <person name="Quintais L.T."/>
            <person name="Guerra-Assuncao J.A."/>
            <person name="Zhou Y."/>
            <person name="Gu Y."/>
            <person name="Yen J."/>
            <person name="Vogel J.H."/>
            <person name="Eyre T."/>
            <person name="Redmond S."/>
            <person name="Banerjee R."/>
            <person name="Chi J."/>
            <person name="Fu B."/>
            <person name="Langley E."/>
            <person name="Maguire S.F."/>
            <person name="Laird G.K."/>
            <person name="Lloyd D."/>
            <person name="Kenyon E."/>
            <person name="Donaldson S."/>
            <person name="Sehra H."/>
            <person name="Almeida-King J."/>
            <person name="Loveland J."/>
            <person name="Trevanion S."/>
            <person name="Jones M."/>
            <person name="Quail M."/>
            <person name="Willey D."/>
            <person name="Hunt A."/>
            <person name="Burton J."/>
            <person name="Sims S."/>
            <person name="McLay K."/>
            <person name="Plumb B."/>
            <person name="Davis J."/>
            <person name="Clee C."/>
            <person name="Oliver K."/>
            <person name="Clark R."/>
            <person name="Riddle C."/>
            <person name="Elliot D."/>
            <person name="Threadgold G."/>
            <person name="Harden G."/>
            <person name="Ware D."/>
            <person name="Begum S."/>
            <person name="Mortimore B."/>
            <person name="Kerry G."/>
            <person name="Heath P."/>
            <person name="Phillimore B."/>
            <person name="Tracey A."/>
            <person name="Corby N."/>
            <person name="Dunn M."/>
            <person name="Johnson C."/>
            <person name="Wood J."/>
            <person name="Clark S."/>
            <person name="Pelan S."/>
            <person name="Griffiths G."/>
            <person name="Smith M."/>
            <person name="Glithero R."/>
            <person name="Howden P."/>
            <person name="Barker N."/>
            <person name="Lloyd C."/>
            <person name="Stevens C."/>
            <person name="Harley J."/>
            <person name="Holt K."/>
            <person name="Panagiotidis G."/>
            <person name="Lovell J."/>
            <person name="Beasley H."/>
            <person name="Henderson C."/>
            <person name="Gordon D."/>
            <person name="Auger K."/>
            <person name="Wright D."/>
            <person name="Collins J."/>
            <person name="Raisen C."/>
            <person name="Dyer L."/>
            <person name="Leung K."/>
            <person name="Robertson L."/>
            <person name="Ambridge K."/>
            <person name="Leongamornlert D."/>
            <person name="McGuire S."/>
            <person name="Gilderthorp R."/>
            <person name="Griffiths C."/>
            <person name="Manthravadi D."/>
            <person name="Nichol S."/>
            <person name="Barker G."/>
            <person name="Whitehead S."/>
            <person name="Kay M."/>
            <person name="Brown J."/>
            <person name="Murnane C."/>
            <person name="Gray E."/>
            <person name="Humphries M."/>
            <person name="Sycamore N."/>
            <person name="Barker D."/>
            <person name="Saunders D."/>
            <person name="Wallis J."/>
            <person name="Babbage A."/>
            <person name="Hammond S."/>
            <person name="Mashreghi-Mohammadi M."/>
            <person name="Barr L."/>
            <person name="Martin S."/>
            <person name="Wray P."/>
            <person name="Ellington A."/>
            <person name="Matthews N."/>
            <person name="Ellwood M."/>
            <person name="Woodmansey R."/>
            <person name="Clark G."/>
            <person name="Cooper J."/>
            <person name="Tromans A."/>
            <person name="Grafham D."/>
            <person name="Skuce C."/>
            <person name="Pandian R."/>
            <person name="Andrews R."/>
            <person name="Harrison E."/>
            <person name="Kimberley A."/>
            <person name="Garnett J."/>
            <person name="Fosker N."/>
            <person name="Hall R."/>
            <person name="Garner P."/>
            <person name="Kelly D."/>
            <person name="Bird C."/>
            <person name="Palmer S."/>
            <person name="Gehring I."/>
            <person name="Berger A."/>
            <person name="Dooley C.M."/>
            <person name="Ersan-Urun Z."/>
            <person name="Eser C."/>
            <person name="Geiger H."/>
            <person name="Geisler M."/>
            <person name="Karotki L."/>
            <person name="Kirn A."/>
            <person name="Konantz J."/>
            <person name="Konantz M."/>
            <person name="Oberlander M."/>
            <person name="Rudolph-Geiger S."/>
            <person name="Teucke M."/>
            <person name="Lanz C."/>
            <person name="Raddatz G."/>
            <person name="Osoegawa K."/>
            <person name="Zhu B."/>
            <person name="Rapp A."/>
            <person name="Widaa S."/>
            <person name="Langford C."/>
            <person name="Yang F."/>
            <person name="Schuster S.C."/>
            <person name="Carter N.P."/>
            <person name="Harrow J."/>
            <person name="Ning Z."/>
            <person name="Herrero J."/>
            <person name="Searle S.M."/>
            <person name="Enright A."/>
            <person name="Geisler R."/>
            <person name="Plasterk R.H."/>
            <person name="Lee C."/>
            <person name="Westerfield M."/>
            <person name="de Jong P.J."/>
            <person name="Zon L.I."/>
            <person name="Postlethwait J.H."/>
            <person name="Nusslein-Volhard C."/>
            <person name="Hubbard T.J."/>
            <person name="Roest Crollius H."/>
            <person name="Rogers J."/>
            <person name="Stemple D.L."/>
        </authorList>
    </citation>
    <scope>NUCLEOTIDE SEQUENCE [LARGE SCALE GENOMIC DNA]</scope>
    <source>
        <strain>Tuebingen</strain>
    </source>
</reference>
<reference evidence="6" key="3">
    <citation type="submission" date="2005-06" db="EMBL/GenBank/DDBJ databases">
        <authorList>
            <consortium name="NIH - Zebrafish Gene Collection (ZGC) project"/>
        </authorList>
    </citation>
    <scope>NUCLEOTIDE SEQUENCE [LARGE SCALE MRNA]</scope>
    <source>
        <strain evidence="7">AB</strain>
        <tissue evidence="6">Brain</tissue>
    </source>
</reference>
<comment type="function">
    <text evidence="4">Transcriptional activator.</text>
</comment>
<comment type="subcellular location">
    <subcellularLocation>
        <location evidence="2">Nucleus</location>
    </subcellularLocation>
</comment>
<comment type="tissue specificity">
    <text evidence="4">First detected at the tail bud stage in the forebrain. At the 3-somite stage, also expressed weakly in the hindbrain. At the 12-somite stage, strongly expressed in the forebrain and weakly expressed throughout the central nervous system. At the 21-somite stage, also expressed in the lens.</text>
</comment>
<comment type="developmental stage">
    <text evidence="4">Expressed zygotically. First detected at the tail bud stage and continues to be expressed for at least the first 48 hours of development.</text>
</comment>
<comment type="domain">
    <text evidence="1">The 9aaTAD motif is a transactivation domain present in a large number of yeast and animal transcription factors.</text>
</comment>
<gene>
    <name evidence="6" type="primary">sox1a</name>
    <name type="ORF">si:dkey-58d5.1</name>
    <name type="ORF">zgc:92865</name>
</gene>
<accession>Q6DGL6</accession>
<accession>B0UY96</accession>
<accession>Q4V997</accession>
<evidence type="ECO:0000250" key="1">
    <source>
        <dbReference type="UniProtKB" id="P41225"/>
    </source>
</evidence>
<evidence type="ECO:0000255" key="2">
    <source>
        <dbReference type="PROSITE-ProRule" id="PRU00267"/>
    </source>
</evidence>
<evidence type="ECO:0000256" key="3">
    <source>
        <dbReference type="SAM" id="MobiDB-lite"/>
    </source>
</evidence>
<evidence type="ECO:0000269" key="4">
    <source>
    </source>
</evidence>
<evidence type="ECO:0000305" key="5"/>
<evidence type="ECO:0000312" key="6">
    <source>
        <dbReference type="EMBL" id="AAH76326.1"/>
    </source>
</evidence>
<evidence type="ECO:0000312" key="7">
    <source>
        <dbReference type="EMBL" id="AAH96992.1"/>
    </source>
</evidence>
<evidence type="ECO:0000312" key="8">
    <source>
        <dbReference type="EMBL" id="BAE48581.1"/>
    </source>
</evidence>
<dbReference type="EMBL" id="AB242327">
    <property type="protein sequence ID" value="BAE48581.1"/>
    <property type="molecule type" value="mRNA"/>
</dbReference>
<dbReference type="EMBL" id="CR392332">
    <property type="protein sequence ID" value="CAQ15644.1"/>
    <property type="molecule type" value="Genomic_DNA"/>
</dbReference>
<dbReference type="EMBL" id="BC076326">
    <property type="protein sequence ID" value="AAH76326.1"/>
    <property type="molecule type" value="mRNA"/>
</dbReference>
<dbReference type="EMBL" id="BC096992">
    <property type="protein sequence ID" value="AAH96992.1"/>
    <property type="molecule type" value="mRNA"/>
</dbReference>
<dbReference type="RefSeq" id="NP_001002483.1">
    <property type="nucleotide sequence ID" value="NM_001002483.1"/>
</dbReference>
<dbReference type="SMR" id="Q6DGL6"/>
<dbReference type="FunCoup" id="Q6DGL6">
    <property type="interactions" value="27"/>
</dbReference>
<dbReference type="STRING" id="7955.ENSDARP00000092797"/>
<dbReference type="PaxDb" id="7955-ENSDARP00000092797"/>
<dbReference type="Ensembl" id="ENSDART00000102021">
    <property type="protein sequence ID" value="ENSDARP00000092797"/>
    <property type="gene ID" value="ENSDARG00000069866"/>
</dbReference>
<dbReference type="Ensembl" id="ENSDART00000184939">
    <property type="protein sequence ID" value="ENSDARP00000148090"/>
    <property type="gene ID" value="ENSDARG00000110682"/>
</dbReference>
<dbReference type="Ensembl" id="ENSDART00000190624">
    <property type="protein sequence ID" value="ENSDARP00000156280"/>
    <property type="gene ID" value="ENSDARG00000114571"/>
</dbReference>
<dbReference type="GeneID" id="436756"/>
<dbReference type="KEGG" id="dre:436756"/>
<dbReference type="AGR" id="ZFIN:ZDB-GENE-040718-186"/>
<dbReference type="CTD" id="436756"/>
<dbReference type="ZFIN" id="ZDB-GENE-040718-186">
    <property type="gene designation" value="sox1a"/>
</dbReference>
<dbReference type="eggNOG" id="KOG0527">
    <property type="taxonomic scope" value="Eukaryota"/>
</dbReference>
<dbReference type="HOGENOM" id="CLU_021123_0_0_1"/>
<dbReference type="InParanoid" id="Q6DGL6"/>
<dbReference type="OMA" id="MMETDMH"/>
<dbReference type="OrthoDB" id="6247875at2759"/>
<dbReference type="PhylomeDB" id="Q6DGL6"/>
<dbReference type="TreeFam" id="TF351735"/>
<dbReference type="Reactome" id="R-DRE-3769402">
    <property type="pathway name" value="Deactivation of the beta-catenin transactivating complex"/>
</dbReference>
<dbReference type="PRO" id="PR:Q6DGL6"/>
<dbReference type="Proteomes" id="UP000000437">
    <property type="component" value="Alternate scaffold 9"/>
</dbReference>
<dbReference type="Proteomes" id="UP000000437">
    <property type="component" value="Chromosome 9"/>
</dbReference>
<dbReference type="Bgee" id="ENSDARG00000069866">
    <property type="expression patterns" value="Expressed in brain and 8 other cell types or tissues"/>
</dbReference>
<dbReference type="GO" id="GO:0005634">
    <property type="term" value="C:nucleus"/>
    <property type="evidence" value="ECO:0000318"/>
    <property type="project" value="GO_Central"/>
</dbReference>
<dbReference type="GO" id="GO:0005667">
    <property type="term" value="C:transcription regulator complex"/>
    <property type="evidence" value="ECO:0000305"/>
    <property type="project" value="ZFIN"/>
</dbReference>
<dbReference type="GO" id="GO:0001228">
    <property type="term" value="F:DNA-binding transcription activator activity, RNA polymerase II-specific"/>
    <property type="evidence" value="ECO:0000318"/>
    <property type="project" value="GO_Central"/>
</dbReference>
<dbReference type="GO" id="GO:0000978">
    <property type="term" value="F:RNA polymerase II cis-regulatory region sequence-specific DNA binding"/>
    <property type="evidence" value="ECO:0000318"/>
    <property type="project" value="GO_Central"/>
</dbReference>
<dbReference type="GO" id="GO:0007420">
    <property type="term" value="P:brain development"/>
    <property type="evidence" value="ECO:0000318"/>
    <property type="project" value="GO_Central"/>
</dbReference>
<dbReference type="GO" id="GO:0007368">
    <property type="term" value="P:determination of left/right symmetry"/>
    <property type="evidence" value="ECO:0000315"/>
    <property type="project" value="ZFIN"/>
</dbReference>
<dbReference type="GO" id="GO:0000122">
    <property type="term" value="P:negative regulation of transcription by RNA polymerase II"/>
    <property type="evidence" value="ECO:0000318"/>
    <property type="project" value="GO_Central"/>
</dbReference>
<dbReference type="GO" id="GO:0030182">
    <property type="term" value="P:neuron differentiation"/>
    <property type="evidence" value="ECO:0000318"/>
    <property type="project" value="GO_Central"/>
</dbReference>
<dbReference type="GO" id="GO:0045944">
    <property type="term" value="P:positive regulation of transcription by RNA polymerase II"/>
    <property type="evidence" value="ECO:0000318"/>
    <property type="project" value="GO_Central"/>
</dbReference>
<dbReference type="CDD" id="cd01388">
    <property type="entry name" value="HMG-box_SoxB"/>
    <property type="match status" value="1"/>
</dbReference>
<dbReference type="FunFam" id="1.10.30.10:FF:000002">
    <property type="entry name" value="transcription factor Sox-2"/>
    <property type="match status" value="1"/>
</dbReference>
<dbReference type="Gene3D" id="1.10.30.10">
    <property type="entry name" value="High mobility group box domain"/>
    <property type="match status" value="1"/>
</dbReference>
<dbReference type="InterPro" id="IPR009071">
    <property type="entry name" value="HMG_box_dom"/>
</dbReference>
<dbReference type="InterPro" id="IPR036910">
    <property type="entry name" value="HMG_box_dom_sf"/>
</dbReference>
<dbReference type="InterPro" id="IPR022097">
    <property type="entry name" value="SOX_fam"/>
</dbReference>
<dbReference type="InterPro" id="IPR050140">
    <property type="entry name" value="SRY-related_HMG-box_TF-like"/>
</dbReference>
<dbReference type="PANTHER" id="PTHR10270">
    <property type="entry name" value="SOX TRANSCRIPTION FACTOR"/>
    <property type="match status" value="1"/>
</dbReference>
<dbReference type="PANTHER" id="PTHR10270:SF328">
    <property type="entry name" value="TRANSCRIPTION FACTOR SOX-1"/>
    <property type="match status" value="1"/>
</dbReference>
<dbReference type="Pfam" id="PF00505">
    <property type="entry name" value="HMG_box"/>
    <property type="match status" value="1"/>
</dbReference>
<dbReference type="Pfam" id="PF12336">
    <property type="entry name" value="SOXp"/>
    <property type="match status" value="1"/>
</dbReference>
<dbReference type="SMART" id="SM00398">
    <property type="entry name" value="HMG"/>
    <property type="match status" value="1"/>
</dbReference>
<dbReference type="SUPFAM" id="SSF47095">
    <property type="entry name" value="HMG-box"/>
    <property type="match status" value="1"/>
</dbReference>
<dbReference type="PROSITE" id="PS50118">
    <property type="entry name" value="HMG_BOX_2"/>
    <property type="match status" value="1"/>
</dbReference>
<feature type="chain" id="PRO_0000238909" description="Transcription factor Sox-1a">
    <location>
        <begin position="1"/>
        <end position="336"/>
    </location>
</feature>
<feature type="DNA-binding region" description="HMG box" evidence="2">
    <location>
        <begin position="37"/>
        <end position="105"/>
    </location>
</feature>
<feature type="region of interest" description="Disordered" evidence="3">
    <location>
        <begin position="1"/>
        <end position="39"/>
    </location>
</feature>
<feature type="region of interest" description="Disordered" evidence="3">
    <location>
        <begin position="193"/>
        <end position="216"/>
    </location>
</feature>
<feature type="short sequence motif" description="9aaTAD" evidence="1">
    <location>
        <begin position="293"/>
        <end position="301"/>
    </location>
</feature>
<feature type="compositionally biased region" description="Polar residues" evidence="3">
    <location>
        <begin position="14"/>
        <end position="32"/>
    </location>
</feature>
<feature type="compositionally biased region" description="Basic residues" evidence="3">
    <location>
        <begin position="200"/>
        <end position="211"/>
    </location>
</feature>
<feature type="sequence conflict" description="In Ref. 3; AAH76326." evidence="5" ref="3">
    <original>G</original>
    <variation>S</variation>
    <location>
        <position position="154"/>
    </location>
</feature>
<feature type="sequence conflict" description="In Ref. 3; AAH76326." evidence="5" ref="3">
    <original>S</original>
    <variation>P</variation>
    <location>
        <position position="259"/>
    </location>
</feature>